<comment type="function">
    <text evidence="1">Catalyzes the attachment of alanine to tRNA(Ala) in a two-step reaction: alanine is first activated by ATP to form Ala-AMP and then transferred to the acceptor end of tRNA(Ala). Also edits incorrectly charged Ser-tRNA(Ala) and Gly-tRNA(Ala) via its editing domain.</text>
</comment>
<comment type="catalytic activity">
    <reaction evidence="1">
        <text>tRNA(Ala) + L-alanine + ATP = L-alanyl-tRNA(Ala) + AMP + diphosphate</text>
        <dbReference type="Rhea" id="RHEA:12540"/>
        <dbReference type="Rhea" id="RHEA-COMP:9657"/>
        <dbReference type="Rhea" id="RHEA-COMP:9923"/>
        <dbReference type="ChEBI" id="CHEBI:30616"/>
        <dbReference type="ChEBI" id="CHEBI:33019"/>
        <dbReference type="ChEBI" id="CHEBI:57972"/>
        <dbReference type="ChEBI" id="CHEBI:78442"/>
        <dbReference type="ChEBI" id="CHEBI:78497"/>
        <dbReference type="ChEBI" id="CHEBI:456215"/>
        <dbReference type="EC" id="6.1.1.7"/>
    </reaction>
</comment>
<comment type="cofactor">
    <cofactor evidence="1">
        <name>Zn(2+)</name>
        <dbReference type="ChEBI" id="CHEBI:29105"/>
    </cofactor>
    <text evidence="1">Binds 1 zinc ion per subunit.</text>
</comment>
<comment type="subcellular location">
    <subcellularLocation>
        <location evidence="1">Cytoplasm</location>
    </subcellularLocation>
</comment>
<comment type="domain">
    <text evidence="1">Consists of three domains; the N-terminal catalytic domain, the editing domain and the C-terminal C-Ala domain. The editing domain removes incorrectly charged amino acids, while the C-Ala domain, along with tRNA(Ala), serves as a bridge to cooperatively bring together the editing and aminoacylation centers thus stimulating deacylation of misacylated tRNAs.</text>
</comment>
<comment type="similarity">
    <text evidence="1">Belongs to the class-II aminoacyl-tRNA synthetase family.</text>
</comment>
<gene>
    <name evidence="1" type="primary">alaS</name>
    <name type="ordered locus">FTW_1402</name>
</gene>
<feature type="chain" id="PRO_0000347616" description="Alanine--tRNA ligase">
    <location>
        <begin position="1"/>
        <end position="865"/>
    </location>
</feature>
<feature type="binding site" evidence="1">
    <location>
        <position position="554"/>
    </location>
    <ligand>
        <name>Zn(2+)</name>
        <dbReference type="ChEBI" id="CHEBI:29105"/>
    </ligand>
</feature>
<feature type="binding site" evidence="1">
    <location>
        <position position="558"/>
    </location>
    <ligand>
        <name>Zn(2+)</name>
        <dbReference type="ChEBI" id="CHEBI:29105"/>
    </ligand>
</feature>
<feature type="binding site" evidence="1">
    <location>
        <position position="656"/>
    </location>
    <ligand>
        <name>Zn(2+)</name>
        <dbReference type="ChEBI" id="CHEBI:29105"/>
    </ligand>
</feature>
<feature type="binding site" evidence="1">
    <location>
        <position position="660"/>
    </location>
    <ligand>
        <name>Zn(2+)</name>
        <dbReference type="ChEBI" id="CHEBI:29105"/>
    </ligand>
</feature>
<name>SYA_FRATW</name>
<evidence type="ECO:0000255" key="1">
    <source>
        <dbReference type="HAMAP-Rule" id="MF_00036"/>
    </source>
</evidence>
<reference key="1">
    <citation type="journal article" date="2007" name="PLoS ONE">
        <title>Complete genomic characterization of a pathogenic A.II strain of Francisella tularensis subspecies tularensis.</title>
        <authorList>
            <person name="Beckstrom-Sternberg S.M."/>
            <person name="Auerbach R.K."/>
            <person name="Godbole S."/>
            <person name="Pearson J.V."/>
            <person name="Beckstrom-Sternberg J.S."/>
            <person name="Deng Z."/>
            <person name="Munk C."/>
            <person name="Kubota K."/>
            <person name="Zhou Y."/>
            <person name="Bruce D."/>
            <person name="Noronha J."/>
            <person name="Scheuermann R.H."/>
            <person name="Wang A."/>
            <person name="Wei X."/>
            <person name="Wang J."/>
            <person name="Hao J."/>
            <person name="Wagner D.M."/>
            <person name="Brettin T.S."/>
            <person name="Brown N."/>
            <person name="Gilna P."/>
            <person name="Keim P.S."/>
        </authorList>
    </citation>
    <scope>NUCLEOTIDE SEQUENCE [LARGE SCALE GENOMIC DNA]</scope>
    <source>
        <strain>WY96-3418</strain>
    </source>
</reference>
<dbReference type="EC" id="6.1.1.7" evidence="1"/>
<dbReference type="EMBL" id="CP000608">
    <property type="protein sequence ID" value="ABO47152.1"/>
    <property type="molecule type" value="Genomic_DNA"/>
</dbReference>
<dbReference type="RefSeq" id="WP_003026667.1">
    <property type="nucleotide sequence ID" value="NC_009257.1"/>
</dbReference>
<dbReference type="SMR" id="A4IZ01"/>
<dbReference type="KEGG" id="ftw:FTW_1402"/>
<dbReference type="HOGENOM" id="CLU_004485_1_1_6"/>
<dbReference type="GO" id="GO:0005829">
    <property type="term" value="C:cytosol"/>
    <property type="evidence" value="ECO:0007669"/>
    <property type="project" value="TreeGrafter"/>
</dbReference>
<dbReference type="GO" id="GO:0004813">
    <property type="term" value="F:alanine-tRNA ligase activity"/>
    <property type="evidence" value="ECO:0007669"/>
    <property type="project" value="UniProtKB-UniRule"/>
</dbReference>
<dbReference type="GO" id="GO:0002161">
    <property type="term" value="F:aminoacyl-tRNA deacylase activity"/>
    <property type="evidence" value="ECO:0007669"/>
    <property type="project" value="TreeGrafter"/>
</dbReference>
<dbReference type="GO" id="GO:0005524">
    <property type="term" value="F:ATP binding"/>
    <property type="evidence" value="ECO:0007669"/>
    <property type="project" value="UniProtKB-UniRule"/>
</dbReference>
<dbReference type="GO" id="GO:0000049">
    <property type="term" value="F:tRNA binding"/>
    <property type="evidence" value="ECO:0007669"/>
    <property type="project" value="UniProtKB-KW"/>
</dbReference>
<dbReference type="GO" id="GO:0008270">
    <property type="term" value="F:zinc ion binding"/>
    <property type="evidence" value="ECO:0007669"/>
    <property type="project" value="UniProtKB-UniRule"/>
</dbReference>
<dbReference type="GO" id="GO:0006419">
    <property type="term" value="P:alanyl-tRNA aminoacylation"/>
    <property type="evidence" value="ECO:0007669"/>
    <property type="project" value="UniProtKB-UniRule"/>
</dbReference>
<dbReference type="GO" id="GO:0045892">
    <property type="term" value="P:negative regulation of DNA-templated transcription"/>
    <property type="evidence" value="ECO:0007669"/>
    <property type="project" value="TreeGrafter"/>
</dbReference>
<dbReference type="CDD" id="cd00673">
    <property type="entry name" value="AlaRS_core"/>
    <property type="match status" value="1"/>
</dbReference>
<dbReference type="FunFam" id="2.40.30.130:FF:000001">
    <property type="entry name" value="Alanine--tRNA ligase"/>
    <property type="match status" value="1"/>
</dbReference>
<dbReference type="FunFam" id="3.10.310.40:FF:000001">
    <property type="entry name" value="Alanine--tRNA ligase"/>
    <property type="match status" value="1"/>
</dbReference>
<dbReference type="FunFam" id="3.30.54.20:FF:000001">
    <property type="entry name" value="Alanine--tRNA ligase"/>
    <property type="match status" value="1"/>
</dbReference>
<dbReference type="FunFam" id="3.30.930.10:FF:000004">
    <property type="entry name" value="Alanine--tRNA ligase"/>
    <property type="match status" value="1"/>
</dbReference>
<dbReference type="FunFam" id="3.30.980.10:FF:000004">
    <property type="entry name" value="Alanine--tRNA ligase, cytoplasmic"/>
    <property type="match status" value="1"/>
</dbReference>
<dbReference type="Gene3D" id="2.40.30.130">
    <property type="match status" value="1"/>
</dbReference>
<dbReference type="Gene3D" id="3.10.310.40">
    <property type="match status" value="1"/>
</dbReference>
<dbReference type="Gene3D" id="3.30.54.20">
    <property type="match status" value="1"/>
</dbReference>
<dbReference type="Gene3D" id="6.10.250.550">
    <property type="match status" value="1"/>
</dbReference>
<dbReference type="Gene3D" id="3.30.930.10">
    <property type="entry name" value="Bira Bifunctional Protein, Domain 2"/>
    <property type="match status" value="1"/>
</dbReference>
<dbReference type="Gene3D" id="3.30.980.10">
    <property type="entry name" value="Threonyl-trna Synthetase, Chain A, domain 2"/>
    <property type="match status" value="1"/>
</dbReference>
<dbReference type="HAMAP" id="MF_00036_B">
    <property type="entry name" value="Ala_tRNA_synth_B"/>
    <property type="match status" value="1"/>
</dbReference>
<dbReference type="InterPro" id="IPR045864">
    <property type="entry name" value="aa-tRNA-synth_II/BPL/LPL"/>
</dbReference>
<dbReference type="InterPro" id="IPR002318">
    <property type="entry name" value="Ala-tRNA-lgiase_IIc"/>
</dbReference>
<dbReference type="InterPro" id="IPR018162">
    <property type="entry name" value="Ala-tRNA-ligase_IIc_anticod-bd"/>
</dbReference>
<dbReference type="InterPro" id="IPR018165">
    <property type="entry name" value="Ala-tRNA-synth_IIc_core"/>
</dbReference>
<dbReference type="InterPro" id="IPR018164">
    <property type="entry name" value="Ala-tRNA-synth_IIc_N"/>
</dbReference>
<dbReference type="InterPro" id="IPR050058">
    <property type="entry name" value="Ala-tRNA_ligase"/>
</dbReference>
<dbReference type="InterPro" id="IPR023033">
    <property type="entry name" value="Ala_tRNA_ligase_euk/bac"/>
</dbReference>
<dbReference type="InterPro" id="IPR003156">
    <property type="entry name" value="DHHA1_dom"/>
</dbReference>
<dbReference type="InterPro" id="IPR018163">
    <property type="entry name" value="Thr/Ala-tRNA-synth_IIc_edit"/>
</dbReference>
<dbReference type="InterPro" id="IPR009000">
    <property type="entry name" value="Transl_B-barrel_sf"/>
</dbReference>
<dbReference type="InterPro" id="IPR012947">
    <property type="entry name" value="tRNA_SAD"/>
</dbReference>
<dbReference type="NCBIfam" id="TIGR00344">
    <property type="entry name" value="alaS"/>
    <property type="match status" value="1"/>
</dbReference>
<dbReference type="PANTHER" id="PTHR11777:SF9">
    <property type="entry name" value="ALANINE--TRNA LIGASE, CYTOPLASMIC"/>
    <property type="match status" value="1"/>
</dbReference>
<dbReference type="PANTHER" id="PTHR11777">
    <property type="entry name" value="ALANYL-TRNA SYNTHETASE"/>
    <property type="match status" value="1"/>
</dbReference>
<dbReference type="Pfam" id="PF02272">
    <property type="entry name" value="DHHA1"/>
    <property type="match status" value="1"/>
</dbReference>
<dbReference type="Pfam" id="PF01411">
    <property type="entry name" value="tRNA-synt_2c"/>
    <property type="match status" value="1"/>
</dbReference>
<dbReference type="Pfam" id="PF07973">
    <property type="entry name" value="tRNA_SAD"/>
    <property type="match status" value="1"/>
</dbReference>
<dbReference type="PRINTS" id="PR00980">
    <property type="entry name" value="TRNASYNTHALA"/>
</dbReference>
<dbReference type="SMART" id="SM00863">
    <property type="entry name" value="tRNA_SAD"/>
    <property type="match status" value="1"/>
</dbReference>
<dbReference type="SUPFAM" id="SSF55681">
    <property type="entry name" value="Class II aaRS and biotin synthetases"/>
    <property type="match status" value="1"/>
</dbReference>
<dbReference type="SUPFAM" id="SSF101353">
    <property type="entry name" value="Putative anticodon-binding domain of alanyl-tRNA synthetase (AlaRS)"/>
    <property type="match status" value="1"/>
</dbReference>
<dbReference type="SUPFAM" id="SSF55186">
    <property type="entry name" value="ThrRS/AlaRS common domain"/>
    <property type="match status" value="1"/>
</dbReference>
<dbReference type="SUPFAM" id="SSF50447">
    <property type="entry name" value="Translation proteins"/>
    <property type="match status" value="1"/>
</dbReference>
<dbReference type="PROSITE" id="PS50860">
    <property type="entry name" value="AA_TRNA_LIGASE_II_ALA"/>
    <property type="match status" value="1"/>
</dbReference>
<accession>A4IZ01</accession>
<organism>
    <name type="scientific">Francisella tularensis subsp. tularensis (strain WY96-3418)</name>
    <dbReference type="NCBI Taxonomy" id="418136"/>
    <lineage>
        <taxon>Bacteria</taxon>
        <taxon>Pseudomonadati</taxon>
        <taxon>Pseudomonadota</taxon>
        <taxon>Gammaproteobacteria</taxon>
        <taxon>Thiotrichales</taxon>
        <taxon>Francisellaceae</taxon>
        <taxon>Francisella</taxon>
    </lineage>
</organism>
<protein>
    <recommendedName>
        <fullName evidence="1">Alanine--tRNA ligase</fullName>
        <ecNumber evidence="1">6.1.1.7</ecNumber>
    </recommendedName>
    <alternativeName>
        <fullName evidence="1">Alanyl-tRNA synthetase</fullName>
        <shortName evidence="1">AlaRS</shortName>
    </alternativeName>
</protein>
<keyword id="KW-0030">Aminoacyl-tRNA synthetase</keyword>
<keyword id="KW-0067">ATP-binding</keyword>
<keyword id="KW-0963">Cytoplasm</keyword>
<keyword id="KW-0436">Ligase</keyword>
<keyword id="KW-0479">Metal-binding</keyword>
<keyword id="KW-0547">Nucleotide-binding</keyword>
<keyword id="KW-0648">Protein biosynthesis</keyword>
<keyword id="KW-0694">RNA-binding</keyword>
<keyword id="KW-0820">tRNA-binding</keyword>
<keyword id="KW-0862">Zinc</keyword>
<sequence length="865" mass="96052">MITTKELRNKFINYFESKNHSHQPSSSLIPFGDDTLLFTNAGMVQFKDVFLGIEKKDFSRAVTVQKCLRAGGKHNDLDNVGYTARHHTFFEMLGNFSFGDYFKKEAISFAWEFLTKEIKLPVEKLWVTIYASDDEAFDVWHKHIGLAKERIIRIDSSDNFWSMGDTGPCGPCTEIFYDHGEDVAGGLPGTPEQDGDRYIEIWNIVFMQYNRHADGSTTDLPKPSVDTGMGLERISAVLQNVHSNYEIDLFQALIKKAQQVTHAKDINSPSLKVIADHIRACAFLIADGVLPANEGRGYVLRRIIRRAIRHGNKVGAKEIFFYKLVAELVSQMGEAYSQLIDKRELIEKTLIKEEELFLKTIENGIKIFDAEIENLKDNTISGEVAFKLYDTYGFPFDLTADMAREKGLKVDEQAFLAQMQIQKQRSKEAGKFNVDYNSLINSQVKSEFRGYSTLIEDAKVLEIYQDGQLVASTSEQVSAVVVLDKTPFYAESGGQVGDKGILEGIGFEFVVEDVQKSGEAILHIGKLVKGRLNLNDELTARVSDKPRLATAANHSATHLLHKALKLVLGGHAEQKGSLVDENRLRFDFTHDKAISRSEIEQIELLVNQQIRANYPVTTIETSQQKAKSLGAEALFGEKYGDIVRVISMGDFSIELCGGTHVAYTGDIGLFKVTSEGSIASGVRRIEAVTADKAIRHTFTNENKIIAIKDSLKANDTNLIDKIKSMLEQIKNQEKQIAKLKKELLSGSSNDIKETNIGDIKVVVANVDGVDVKTLRNKIDDYKSKNTKVIAVLTTTNADKVQFVIGVSNALTTLIKAGDIAKELSSHIDGKGGGRADMAQGGGNNSANIDQALSQVEKFILNNIKE</sequence>
<proteinExistence type="inferred from homology"/>